<sequence length="1044" mass="110586">MEPRLRVFELARELGVDSKRVLEVLQSLNVDVKNHMSTIDQKTAEKVTDAVRRTEAQEGQGAGKSAAKSAKPAAQPKPTREANPAKTSLLEDFFGSGTRPQRPLSEKRERRPLTERRPLAERRPLAERPLVDRPVTERPLAERPAAELRPGAAKAAAPARPAAEAQPVAERRAPAEAAQAAQAERRPAEKAQPAAAAKAAPPEKAGAAPVPGAVAEQKQAATPAAAEQKPAGKAEQTAGAAQAKPARAEAGTGASSRPASAAPAAQGEKRPAAAAERREEPQAEAPQTSGPSRPVPAGPGQPARPAGSGIGVPVKPAAGGKSGLGLPTRPGEKAADGARGGGSGIGLPVKPAAGQGTAARAGGLGLPQKPKAGAPRPGGGLGAPQRPGRRGAPLAIPKLDPKVAEQAKAGEGKPRYGQSGDKRRADLYDRREHPSSQPSEEKLFGQRPKRKASAQERRVLKPITVTGPMSVKDLAHEMGVTAAEVIKTLLTGFGIMATINQELDVDTCVLVASEFGVEATVEQKEDIIEVYDRVEDPDEPAELKKPRHPVVTIMGHVDHGKTSLLDAIRQAKVAAGEAGGITQHIGAYEVELNGRKITFLDTPGHEAFTAMRARGANVTDIAVLVVAADDSVMPQTVESINHAKAANVPILVAINKIDKPEANPQRVMQDLTQYGLVPEEWGGDTIMVPVSAKQKTNLDLLLENILVLAEVSDLKANPDKPAAGTILEAALDKARGPVATVLVQAGTLNTGDVFVAGTSWGRVRAMFDHRGRKLKSAGPSTPVRVLGFDSVPQAGDVFRVTPDEKTARAIAEKRIAKAQAERLAQKAISLDDFMNQVAQGEIKDLNVIVKADVQGSVEAIRGQLEKLRNEEVKVKVIHAGVGAISESDVMLAVASKAIIIGFNVRPDDRASRAADEHGIDVRTYSVIYDIVDDIEAAMKGMLKPKIEEVILGKAEVRETFKVPKVGMAAGCMVIQGKVTRNARYRLIRDGVVVWDGEINALRRFKDEVREVSEGYECGITLQNFHDFKRGDILEAYELQEIKAG</sequence>
<proteinExistence type="inferred from homology"/>
<evidence type="ECO:0000250" key="1"/>
<evidence type="ECO:0000255" key="2">
    <source>
        <dbReference type="HAMAP-Rule" id="MF_00100"/>
    </source>
</evidence>
<evidence type="ECO:0000256" key="3">
    <source>
        <dbReference type="SAM" id="MobiDB-lite"/>
    </source>
</evidence>
<accession>Q67P86</accession>
<comment type="function">
    <text evidence="2">One of the essential components for the initiation of protein synthesis. Protects formylmethionyl-tRNA from spontaneous hydrolysis and promotes its binding to the 30S ribosomal subunits. Also involved in the hydrolysis of GTP during the formation of the 70S ribosomal complex.</text>
</comment>
<comment type="subcellular location">
    <subcellularLocation>
        <location evidence="2">Cytoplasm</location>
    </subcellularLocation>
</comment>
<comment type="similarity">
    <text evidence="2">Belongs to the TRAFAC class translation factor GTPase superfamily. Classic translation factor GTPase family. IF-2 subfamily.</text>
</comment>
<protein>
    <recommendedName>
        <fullName evidence="2">Translation initiation factor IF-2</fullName>
    </recommendedName>
</protein>
<gene>
    <name evidence="2" type="primary">infB</name>
    <name type="ordered locus">STH1522</name>
</gene>
<feature type="chain" id="PRO_0000228252" description="Translation initiation factor IF-2">
    <location>
        <begin position="1"/>
        <end position="1044"/>
    </location>
</feature>
<feature type="domain" description="tr-type G">
    <location>
        <begin position="546"/>
        <end position="714"/>
    </location>
</feature>
<feature type="region of interest" description="Disordered" evidence="3">
    <location>
        <begin position="55"/>
        <end position="458"/>
    </location>
</feature>
<feature type="region of interest" description="G1" evidence="1">
    <location>
        <begin position="555"/>
        <end position="562"/>
    </location>
</feature>
<feature type="region of interest" description="G2" evidence="1">
    <location>
        <begin position="580"/>
        <end position="584"/>
    </location>
</feature>
<feature type="region of interest" description="G3" evidence="1">
    <location>
        <begin position="601"/>
        <end position="604"/>
    </location>
</feature>
<feature type="region of interest" description="G4" evidence="1">
    <location>
        <begin position="655"/>
        <end position="658"/>
    </location>
</feature>
<feature type="region of interest" description="G5" evidence="1">
    <location>
        <begin position="691"/>
        <end position="693"/>
    </location>
</feature>
<feature type="compositionally biased region" description="Low complexity" evidence="3">
    <location>
        <begin position="57"/>
        <end position="77"/>
    </location>
</feature>
<feature type="compositionally biased region" description="Basic and acidic residues" evidence="3">
    <location>
        <begin position="104"/>
        <end position="146"/>
    </location>
</feature>
<feature type="compositionally biased region" description="Low complexity" evidence="3">
    <location>
        <begin position="147"/>
        <end position="168"/>
    </location>
</feature>
<feature type="compositionally biased region" description="Low complexity" evidence="3">
    <location>
        <begin position="190"/>
        <end position="231"/>
    </location>
</feature>
<feature type="compositionally biased region" description="Low complexity" evidence="3">
    <location>
        <begin position="254"/>
        <end position="265"/>
    </location>
</feature>
<feature type="compositionally biased region" description="Basic and acidic residues" evidence="3">
    <location>
        <begin position="267"/>
        <end position="281"/>
    </location>
</feature>
<feature type="compositionally biased region" description="Low complexity" evidence="3">
    <location>
        <begin position="352"/>
        <end position="375"/>
    </location>
</feature>
<feature type="compositionally biased region" description="Low complexity" evidence="3">
    <location>
        <begin position="383"/>
        <end position="395"/>
    </location>
</feature>
<feature type="compositionally biased region" description="Basic and acidic residues" evidence="3">
    <location>
        <begin position="399"/>
        <end position="444"/>
    </location>
</feature>
<feature type="binding site" evidence="2">
    <location>
        <begin position="555"/>
        <end position="562"/>
    </location>
    <ligand>
        <name>GTP</name>
        <dbReference type="ChEBI" id="CHEBI:37565"/>
    </ligand>
</feature>
<feature type="binding site" evidence="2">
    <location>
        <begin position="601"/>
        <end position="605"/>
    </location>
    <ligand>
        <name>GTP</name>
        <dbReference type="ChEBI" id="CHEBI:37565"/>
    </ligand>
</feature>
<feature type="binding site" evidence="2">
    <location>
        <begin position="655"/>
        <end position="658"/>
    </location>
    <ligand>
        <name>GTP</name>
        <dbReference type="ChEBI" id="CHEBI:37565"/>
    </ligand>
</feature>
<organism>
    <name type="scientific">Symbiobacterium thermophilum (strain DSM 24528 / JCM 14929 / IAM 14863 / T)</name>
    <dbReference type="NCBI Taxonomy" id="292459"/>
    <lineage>
        <taxon>Bacteria</taxon>
        <taxon>Bacillati</taxon>
        <taxon>Bacillota</taxon>
        <taxon>Clostridia</taxon>
        <taxon>Eubacteriales</taxon>
        <taxon>Symbiobacteriaceae</taxon>
        <taxon>Symbiobacterium</taxon>
    </lineage>
</organism>
<name>IF2_SYMTH</name>
<reference key="1">
    <citation type="journal article" date="2004" name="Nucleic Acids Res.">
        <title>Genome sequence of Symbiobacterium thermophilum, an uncultivable bacterium that depends on microbial commensalism.</title>
        <authorList>
            <person name="Ueda K."/>
            <person name="Yamashita A."/>
            <person name="Ishikawa J."/>
            <person name="Shimada M."/>
            <person name="Watsuji T."/>
            <person name="Morimura K."/>
            <person name="Ikeda H."/>
            <person name="Hattori M."/>
            <person name="Beppu T."/>
        </authorList>
    </citation>
    <scope>NUCLEOTIDE SEQUENCE [LARGE SCALE GENOMIC DNA]</scope>
    <source>
        <strain>DSM 24528 / JCM 14929 / IAM 14863 / T</strain>
    </source>
</reference>
<keyword id="KW-0963">Cytoplasm</keyword>
<keyword id="KW-0342">GTP-binding</keyword>
<keyword id="KW-0396">Initiation factor</keyword>
<keyword id="KW-0547">Nucleotide-binding</keyword>
<keyword id="KW-0648">Protein biosynthesis</keyword>
<keyword id="KW-1185">Reference proteome</keyword>
<dbReference type="EMBL" id="AP006840">
    <property type="protein sequence ID" value="BAD40507.1"/>
    <property type="molecule type" value="Genomic_DNA"/>
</dbReference>
<dbReference type="RefSeq" id="WP_011195652.1">
    <property type="nucleotide sequence ID" value="NC_006177.1"/>
</dbReference>
<dbReference type="SMR" id="Q67P86"/>
<dbReference type="STRING" id="292459.STH1522"/>
<dbReference type="KEGG" id="sth:STH1522"/>
<dbReference type="eggNOG" id="COG0532">
    <property type="taxonomic scope" value="Bacteria"/>
</dbReference>
<dbReference type="HOGENOM" id="CLU_006301_5_1_9"/>
<dbReference type="Proteomes" id="UP000000417">
    <property type="component" value="Chromosome"/>
</dbReference>
<dbReference type="GO" id="GO:0005829">
    <property type="term" value="C:cytosol"/>
    <property type="evidence" value="ECO:0007669"/>
    <property type="project" value="TreeGrafter"/>
</dbReference>
<dbReference type="GO" id="GO:0005525">
    <property type="term" value="F:GTP binding"/>
    <property type="evidence" value="ECO:0007669"/>
    <property type="project" value="UniProtKB-KW"/>
</dbReference>
<dbReference type="GO" id="GO:0003924">
    <property type="term" value="F:GTPase activity"/>
    <property type="evidence" value="ECO:0007669"/>
    <property type="project" value="UniProtKB-UniRule"/>
</dbReference>
<dbReference type="GO" id="GO:0003743">
    <property type="term" value="F:translation initiation factor activity"/>
    <property type="evidence" value="ECO:0007669"/>
    <property type="project" value="UniProtKB-UniRule"/>
</dbReference>
<dbReference type="CDD" id="cd01887">
    <property type="entry name" value="IF2_eIF5B"/>
    <property type="match status" value="1"/>
</dbReference>
<dbReference type="CDD" id="cd03702">
    <property type="entry name" value="IF2_mtIF2_II"/>
    <property type="match status" value="1"/>
</dbReference>
<dbReference type="CDD" id="cd03692">
    <property type="entry name" value="mtIF2_IVc"/>
    <property type="match status" value="1"/>
</dbReference>
<dbReference type="FunFam" id="2.40.30.10:FF:000007">
    <property type="entry name" value="Translation initiation factor IF-2"/>
    <property type="match status" value="1"/>
</dbReference>
<dbReference type="FunFam" id="2.40.30.10:FF:000008">
    <property type="entry name" value="Translation initiation factor IF-2"/>
    <property type="match status" value="1"/>
</dbReference>
<dbReference type="FunFam" id="3.40.50.10050:FF:000001">
    <property type="entry name" value="Translation initiation factor IF-2"/>
    <property type="match status" value="1"/>
</dbReference>
<dbReference type="FunFam" id="3.40.50.300:FF:000019">
    <property type="entry name" value="Translation initiation factor IF-2"/>
    <property type="match status" value="1"/>
</dbReference>
<dbReference type="Gene3D" id="1.10.10.2480">
    <property type="match status" value="1"/>
</dbReference>
<dbReference type="Gene3D" id="3.40.50.300">
    <property type="entry name" value="P-loop containing nucleotide triphosphate hydrolases"/>
    <property type="match status" value="1"/>
</dbReference>
<dbReference type="Gene3D" id="2.40.30.10">
    <property type="entry name" value="Translation factors"/>
    <property type="match status" value="2"/>
</dbReference>
<dbReference type="Gene3D" id="3.40.50.10050">
    <property type="entry name" value="Translation initiation factor IF- 2, domain 3"/>
    <property type="match status" value="1"/>
</dbReference>
<dbReference type="HAMAP" id="MF_00100_B">
    <property type="entry name" value="IF_2_B"/>
    <property type="match status" value="1"/>
</dbReference>
<dbReference type="InterPro" id="IPR053905">
    <property type="entry name" value="EF-G-like_DII"/>
</dbReference>
<dbReference type="InterPro" id="IPR044145">
    <property type="entry name" value="IF2_II"/>
</dbReference>
<dbReference type="InterPro" id="IPR006847">
    <property type="entry name" value="IF2_N"/>
</dbReference>
<dbReference type="InterPro" id="IPR027417">
    <property type="entry name" value="P-loop_NTPase"/>
</dbReference>
<dbReference type="InterPro" id="IPR005225">
    <property type="entry name" value="Small_GTP-bd"/>
</dbReference>
<dbReference type="InterPro" id="IPR000795">
    <property type="entry name" value="T_Tr_GTP-bd_dom"/>
</dbReference>
<dbReference type="InterPro" id="IPR000178">
    <property type="entry name" value="TF_IF2_bacterial-like"/>
</dbReference>
<dbReference type="InterPro" id="IPR015760">
    <property type="entry name" value="TIF_IF2"/>
</dbReference>
<dbReference type="InterPro" id="IPR023115">
    <property type="entry name" value="TIF_IF2_dom3"/>
</dbReference>
<dbReference type="InterPro" id="IPR036925">
    <property type="entry name" value="TIF_IF2_dom3_sf"/>
</dbReference>
<dbReference type="InterPro" id="IPR009000">
    <property type="entry name" value="Transl_B-barrel_sf"/>
</dbReference>
<dbReference type="NCBIfam" id="TIGR00487">
    <property type="entry name" value="IF-2"/>
    <property type="match status" value="1"/>
</dbReference>
<dbReference type="NCBIfam" id="TIGR00231">
    <property type="entry name" value="small_GTP"/>
    <property type="match status" value="1"/>
</dbReference>
<dbReference type="PANTHER" id="PTHR43381:SF5">
    <property type="entry name" value="TR-TYPE G DOMAIN-CONTAINING PROTEIN"/>
    <property type="match status" value="1"/>
</dbReference>
<dbReference type="PANTHER" id="PTHR43381">
    <property type="entry name" value="TRANSLATION INITIATION FACTOR IF-2-RELATED"/>
    <property type="match status" value="1"/>
</dbReference>
<dbReference type="Pfam" id="PF22042">
    <property type="entry name" value="EF-G_D2"/>
    <property type="match status" value="1"/>
</dbReference>
<dbReference type="Pfam" id="PF00009">
    <property type="entry name" value="GTP_EFTU"/>
    <property type="match status" value="1"/>
</dbReference>
<dbReference type="Pfam" id="PF11987">
    <property type="entry name" value="IF-2"/>
    <property type="match status" value="1"/>
</dbReference>
<dbReference type="Pfam" id="PF04760">
    <property type="entry name" value="IF2_N"/>
    <property type="match status" value="2"/>
</dbReference>
<dbReference type="SUPFAM" id="SSF52156">
    <property type="entry name" value="Initiation factor IF2/eIF5b, domain 3"/>
    <property type="match status" value="1"/>
</dbReference>
<dbReference type="SUPFAM" id="SSF52540">
    <property type="entry name" value="P-loop containing nucleoside triphosphate hydrolases"/>
    <property type="match status" value="1"/>
</dbReference>
<dbReference type="SUPFAM" id="SSF50447">
    <property type="entry name" value="Translation proteins"/>
    <property type="match status" value="2"/>
</dbReference>
<dbReference type="PROSITE" id="PS51722">
    <property type="entry name" value="G_TR_2"/>
    <property type="match status" value="1"/>
</dbReference>
<dbReference type="PROSITE" id="PS01176">
    <property type="entry name" value="IF2"/>
    <property type="match status" value="1"/>
</dbReference>